<keyword id="KW-1015">Disulfide bond</keyword>
<keyword id="KW-0872">Ion channel impairing toxin</keyword>
<keyword id="KW-0528">Neurotoxin</keyword>
<keyword id="KW-0632">Potassium channel impairing toxin</keyword>
<keyword id="KW-0964">Secreted</keyword>
<keyword id="KW-0732">Signal</keyword>
<keyword id="KW-0800">Toxin</keyword>
<organism>
    <name type="scientific">Lychas mucronatus</name>
    <name type="common">Chinese swimming scorpion</name>
    <dbReference type="NCBI Taxonomy" id="172552"/>
    <lineage>
        <taxon>Eukaryota</taxon>
        <taxon>Metazoa</taxon>
        <taxon>Ecdysozoa</taxon>
        <taxon>Arthropoda</taxon>
        <taxon>Chelicerata</taxon>
        <taxon>Arachnida</taxon>
        <taxon>Scorpiones</taxon>
        <taxon>Buthida</taxon>
        <taxon>Buthoidea</taxon>
        <taxon>Buthidae</taxon>
        <taxon>Lychas</taxon>
    </lineage>
</organism>
<reference key="1">
    <citation type="journal article" date="2010" name="BMC Genomics">
        <title>Comparative venom gland transcriptome analysis of the scorpion Lychas mucronatus reveals intraspecific toxic gene diversity and new venomous components.</title>
        <authorList>
            <person name="Zhao R."/>
            <person name="Ma Y."/>
            <person name="He Y."/>
            <person name="Di Z."/>
            <person name="Wu Y.-L."/>
            <person name="Cao Z.-J."/>
            <person name="Li W.-X."/>
        </authorList>
    </citation>
    <scope>NUCLEOTIDE SEQUENCE [MRNA]</scope>
    <source>
        <strain>Yunnan</strain>
        <tissue>Venom gland</tissue>
    </source>
</reference>
<proteinExistence type="evidence at transcript level"/>
<comment type="function">
    <text evidence="1">Inhibits voltage-gated potassium channels.</text>
</comment>
<comment type="subcellular location">
    <subcellularLocation>
        <location evidence="1">Secreted</location>
    </subcellularLocation>
</comment>
<comment type="tissue specificity">
    <text>Expressed by the venom gland.</text>
</comment>
<comment type="domain">
    <text evidence="3">Has the structural arrangement of an alpha-helix connected to antiparallel beta-sheets by disulfide bonds (CS-alpha/beta).</text>
</comment>
<comment type="similarity">
    <text evidence="3">Belongs to the short scorpion toxin superfamily. Potassium channel inhibitor family. Alpha-KTx 12 subfamily.</text>
</comment>
<evidence type="ECO:0000250" key="1"/>
<evidence type="ECO:0000255" key="2"/>
<evidence type="ECO:0000305" key="3"/>
<dbReference type="EMBL" id="GT029234">
    <property type="status" value="NOT_ANNOTATED_CDS"/>
    <property type="molecule type" value="mRNA"/>
</dbReference>
<dbReference type="SMR" id="P0CI48"/>
<dbReference type="GO" id="GO:0005576">
    <property type="term" value="C:extracellular region"/>
    <property type="evidence" value="ECO:0007669"/>
    <property type="project" value="UniProtKB-SubCell"/>
</dbReference>
<dbReference type="GO" id="GO:0008200">
    <property type="term" value="F:ion channel inhibitor activity"/>
    <property type="evidence" value="ECO:0007669"/>
    <property type="project" value="InterPro"/>
</dbReference>
<dbReference type="GO" id="GO:0015459">
    <property type="term" value="F:potassium channel regulator activity"/>
    <property type="evidence" value="ECO:0007669"/>
    <property type="project" value="UniProtKB-KW"/>
</dbReference>
<dbReference type="GO" id="GO:0090729">
    <property type="term" value="F:toxin activity"/>
    <property type="evidence" value="ECO:0007669"/>
    <property type="project" value="UniProtKB-KW"/>
</dbReference>
<dbReference type="Gene3D" id="3.30.30.10">
    <property type="entry name" value="Knottin, scorpion toxin-like"/>
    <property type="match status" value="1"/>
</dbReference>
<dbReference type="InterPro" id="IPR036574">
    <property type="entry name" value="Scorpion_toxin-like_sf"/>
</dbReference>
<dbReference type="InterPro" id="IPR001947">
    <property type="entry name" value="Scorpion_toxinS_K_inh"/>
</dbReference>
<dbReference type="Pfam" id="PF00451">
    <property type="entry name" value="Toxin_2"/>
    <property type="match status" value="1"/>
</dbReference>
<dbReference type="SUPFAM" id="SSF57095">
    <property type="entry name" value="Scorpion toxin-like"/>
    <property type="match status" value="1"/>
</dbReference>
<dbReference type="PROSITE" id="PS01138">
    <property type="entry name" value="SCORP_SHORT_TOXIN"/>
    <property type="match status" value="1"/>
</dbReference>
<name>KA127_LYCMC</name>
<feature type="signal peptide" evidence="2">
    <location>
        <begin position="1"/>
        <end position="22"/>
    </location>
</feature>
<feature type="chain" id="PRO_0000403828" description="Potassium channel toxin alpha-KTx 12.7">
    <location>
        <begin position="23"/>
        <end position="60"/>
    </location>
</feature>
<feature type="disulfide bond" evidence="1">
    <location>
        <begin position="30"/>
        <end position="51"/>
    </location>
</feature>
<feature type="disulfide bond" evidence="1">
    <location>
        <begin position="36"/>
        <end position="56"/>
    </location>
</feature>
<feature type="disulfide bond" evidence="1">
    <location>
        <begin position="40"/>
        <end position="58"/>
    </location>
</feature>
<protein>
    <recommendedName>
        <fullName>Potassium channel toxin alpha-KTx 12.7</fullName>
    </recommendedName>
</protein>
<sequence>MSNMPVLIITLLLFSMYISTAAQKPTEIKCRYPADCHIMCRKVTGRAEGKCMNGKCTCYY</sequence>
<accession>P0CI48</accession>